<comment type="similarity">
    <text evidence="1">Belongs to the universal ribosomal protein uS2 family.</text>
</comment>
<sequence length="244" mass="27507">MEIVSMRDMLKAGVHFGHQTRYWNPKMKPFIFGSRNKVHIINLEKTLPMFNFALSELKKISLKKGKILFVGTKRAASKKIKETALNCNQFYVNHRWLGGMLTNWKTVRQSIKRLKDLETESQDGTFSKITKKEALIRTRELSKLENSLGGIKNMGGLPDCLFVIDAAHENIAIKEANNLGIPVFAIVDTNSNPDGVDYVIPGNDDAIRSVTLYLQAVSLSICKNQNGNSFSEMLLDSDKKMNIE</sequence>
<name>RS2_BUCAP</name>
<organism>
    <name type="scientific">Buchnera aphidicola subsp. Schizaphis graminum (strain Sg)</name>
    <dbReference type="NCBI Taxonomy" id="198804"/>
    <lineage>
        <taxon>Bacteria</taxon>
        <taxon>Pseudomonadati</taxon>
        <taxon>Pseudomonadota</taxon>
        <taxon>Gammaproteobacteria</taxon>
        <taxon>Enterobacterales</taxon>
        <taxon>Erwiniaceae</taxon>
        <taxon>Buchnera</taxon>
    </lineage>
</organism>
<feature type="chain" id="PRO_0000134143" description="Small ribosomal subunit protein uS2">
    <location>
        <begin position="1"/>
        <end position="244"/>
    </location>
</feature>
<evidence type="ECO:0000255" key="1">
    <source>
        <dbReference type="HAMAP-Rule" id="MF_00291"/>
    </source>
</evidence>
<evidence type="ECO:0000305" key="2"/>
<proteinExistence type="inferred from homology"/>
<accession>Q8K9T0</accession>
<protein>
    <recommendedName>
        <fullName evidence="1">Small ribosomal subunit protein uS2</fullName>
    </recommendedName>
    <alternativeName>
        <fullName evidence="2">30S ribosomal protein S2</fullName>
    </alternativeName>
</protein>
<reference key="1">
    <citation type="journal article" date="2002" name="Science">
        <title>50 million years of genomic stasis in endosymbiotic bacteria.</title>
        <authorList>
            <person name="Tamas I."/>
            <person name="Klasson L."/>
            <person name="Canbaeck B."/>
            <person name="Naeslund A.K."/>
            <person name="Eriksson A.-S."/>
            <person name="Wernegreen J.J."/>
            <person name="Sandstroem J.P."/>
            <person name="Moran N.A."/>
            <person name="Andersson S.G.E."/>
        </authorList>
    </citation>
    <scope>NUCLEOTIDE SEQUENCE [LARGE SCALE GENOMIC DNA]</scope>
    <source>
        <strain>Sg</strain>
    </source>
</reference>
<gene>
    <name evidence="1" type="primary">rpsB</name>
    <name type="ordered locus">BUsg_225</name>
</gene>
<keyword id="KW-0687">Ribonucleoprotein</keyword>
<keyword id="KW-0689">Ribosomal protein</keyword>
<dbReference type="EMBL" id="AE013218">
    <property type="protein sequence ID" value="AAM67784.1"/>
    <property type="molecule type" value="Genomic_DNA"/>
</dbReference>
<dbReference type="RefSeq" id="WP_011053751.1">
    <property type="nucleotide sequence ID" value="NC_004061.1"/>
</dbReference>
<dbReference type="SMR" id="Q8K9T0"/>
<dbReference type="STRING" id="198804.BUsg_225"/>
<dbReference type="GeneID" id="93003691"/>
<dbReference type="KEGG" id="bas:BUsg_225"/>
<dbReference type="eggNOG" id="COG0052">
    <property type="taxonomic scope" value="Bacteria"/>
</dbReference>
<dbReference type="HOGENOM" id="CLU_040318_1_2_6"/>
<dbReference type="Proteomes" id="UP000000416">
    <property type="component" value="Chromosome"/>
</dbReference>
<dbReference type="GO" id="GO:0022627">
    <property type="term" value="C:cytosolic small ribosomal subunit"/>
    <property type="evidence" value="ECO:0007669"/>
    <property type="project" value="TreeGrafter"/>
</dbReference>
<dbReference type="GO" id="GO:0003735">
    <property type="term" value="F:structural constituent of ribosome"/>
    <property type="evidence" value="ECO:0007669"/>
    <property type="project" value="InterPro"/>
</dbReference>
<dbReference type="GO" id="GO:0006412">
    <property type="term" value="P:translation"/>
    <property type="evidence" value="ECO:0007669"/>
    <property type="project" value="UniProtKB-UniRule"/>
</dbReference>
<dbReference type="CDD" id="cd01425">
    <property type="entry name" value="RPS2"/>
    <property type="match status" value="1"/>
</dbReference>
<dbReference type="FunFam" id="1.10.287.610:FF:000001">
    <property type="entry name" value="30S ribosomal protein S2"/>
    <property type="match status" value="1"/>
</dbReference>
<dbReference type="Gene3D" id="3.40.50.10490">
    <property type="entry name" value="Glucose-6-phosphate isomerase like protein, domain 1"/>
    <property type="match status" value="1"/>
</dbReference>
<dbReference type="Gene3D" id="1.10.287.610">
    <property type="entry name" value="Helix hairpin bin"/>
    <property type="match status" value="1"/>
</dbReference>
<dbReference type="HAMAP" id="MF_00291_B">
    <property type="entry name" value="Ribosomal_uS2_B"/>
    <property type="match status" value="1"/>
</dbReference>
<dbReference type="InterPro" id="IPR001865">
    <property type="entry name" value="Ribosomal_uS2"/>
</dbReference>
<dbReference type="InterPro" id="IPR005706">
    <property type="entry name" value="Ribosomal_uS2_bac/mit/plastid"/>
</dbReference>
<dbReference type="InterPro" id="IPR018130">
    <property type="entry name" value="Ribosomal_uS2_CS"/>
</dbReference>
<dbReference type="InterPro" id="IPR023591">
    <property type="entry name" value="Ribosomal_uS2_flav_dom_sf"/>
</dbReference>
<dbReference type="NCBIfam" id="TIGR01011">
    <property type="entry name" value="rpsB_bact"/>
    <property type="match status" value="1"/>
</dbReference>
<dbReference type="PANTHER" id="PTHR12534">
    <property type="entry name" value="30S RIBOSOMAL PROTEIN S2 PROKARYOTIC AND ORGANELLAR"/>
    <property type="match status" value="1"/>
</dbReference>
<dbReference type="PANTHER" id="PTHR12534:SF0">
    <property type="entry name" value="SMALL RIBOSOMAL SUBUNIT PROTEIN US2M"/>
    <property type="match status" value="1"/>
</dbReference>
<dbReference type="Pfam" id="PF00318">
    <property type="entry name" value="Ribosomal_S2"/>
    <property type="match status" value="1"/>
</dbReference>
<dbReference type="PRINTS" id="PR00395">
    <property type="entry name" value="RIBOSOMALS2"/>
</dbReference>
<dbReference type="SUPFAM" id="SSF52313">
    <property type="entry name" value="Ribosomal protein S2"/>
    <property type="match status" value="1"/>
</dbReference>
<dbReference type="PROSITE" id="PS00962">
    <property type="entry name" value="RIBOSOMAL_S2_1"/>
    <property type="match status" value="1"/>
</dbReference>
<dbReference type="PROSITE" id="PS00963">
    <property type="entry name" value="RIBOSOMAL_S2_2"/>
    <property type="match status" value="1"/>
</dbReference>